<organism>
    <name type="scientific">Streptococcus pneumoniae serotype 4 (strain ATCC BAA-334 / TIGR4)</name>
    <dbReference type="NCBI Taxonomy" id="170187"/>
    <lineage>
        <taxon>Bacteria</taxon>
        <taxon>Bacillati</taxon>
        <taxon>Bacillota</taxon>
        <taxon>Bacilli</taxon>
        <taxon>Lactobacillales</taxon>
        <taxon>Streptococcaceae</taxon>
        <taxon>Streptococcus</taxon>
    </lineage>
</organism>
<protein>
    <recommendedName>
        <fullName evidence="1">Peptide chain release factor 2</fullName>
        <shortName evidence="1">RF-2</shortName>
    </recommendedName>
</protein>
<gene>
    <name evidence="1" type="primary">prfB</name>
    <name type="ordered locus">SP_0755</name>
</gene>
<comment type="function">
    <text evidence="1">Peptide chain release factor 2 directs the termination of translation in response to the peptide chain termination codons UGA and UAA.</text>
</comment>
<comment type="subcellular location">
    <subcellularLocation>
        <location evidence="1">Cytoplasm</location>
    </subcellularLocation>
</comment>
<comment type="PTM">
    <text evidence="1">Methylated by PrmC. Methylation increases the termination efficiency of RF2.</text>
</comment>
<comment type="similarity">
    <text evidence="1">Belongs to the prokaryotic/mitochondrial release factor family.</text>
</comment>
<sequence>MDISVIRQKIDANREKLASFRGSLDLEGLEEEIAILENKMTEPDFWNDNIAAQKTSQELNELKNTYNTFHKMEELQDEVEILLDFLAEDESVHDELVAQLAELDKIMTSYEMTLLLSEPYDHNNAILEIHPGSGGTEAQDWGDMLLRMYTRYGNAKGFKVEVLDYQAGDEAGIKSVTLSFEGPNAYGLLKSEMGVHRLVRISPFDSAKRRHTSFTSVEVMPELDDTIEVEIREDDIKMDTFRSGGAGGQNVNKVSTGVRLTHIPTGIVVQSTVDRTQYGNRDRAMKMLQAKLYQMEQDKKAAEVDSLKGEKKEITWGSQIRSYVFTPYTMVKDHRTSFEVAQVDKVMDGDLDGFIDAYLKWRIS</sequence>
<accession>Q2MGI2</accession>
<proteinExistence type="inferred from homology"/>
<keyword id="KW-0963">Cytoplasm</keyword>
<keyword id="KW-0488">Methylation</keyword>
<keyword id="KW-0648">Protein biosynthesis</keyword>
<keyword id="KW-1185">Reference proteome</keyword>
<reference key="1">
    <citation type="journal article" date="2001" name="Science">
        <title>Complete genome sequence of a virulent isolate of Streptococcus pneumoniae.</title>
        <authorList>
            <person name="Tettelin H."/>
            <person name="Nelson K.E."/>
            <person name="Paulsen I.T."/>
            <person name="Eisen J.A."/>
            <person name="Read T.D."/>
            <person name="Peterson S.N."/>
            <person name="Heidelberg J.F."/>
            <person name="DeBoy R.T."/>
            <person name="Haft D.H."/>
            <person name="Dodson R.J."/>
            <person name="Durkin A.S."/>
            <person name="Gwinn M.L."/>
            <person name="Kolonay J.F."/>
            <person name="Nelson W.C."/>
            <person name="Peterson J.D."/>
            <person name="Umayam L.A."/>
            <person name="White O."/>
            <person name="Salzberg S.L."/>
            <person name="Lewis M.R."/>
            <person name="Radune D."/>
            <person name="Holtzapple E.K."/>
            <person name="Khouri H.M."/>
            <person name="Wolf A.M."/>
            <person name="Utterback T.R."/>
            <person name="Hansen C.L."/>
            <person name="McDonald L.A."/>
            <person name="Feldblyum T.V."/>
            <person name="Angiuoli S.V."/>
            <person name="Dickinson T."/>
            <person name="Hickey E.K."/>
            <person name="Holt I.E."/>
            <person name="Loftus B.J."/>
            <person name="Yang F."/>
            <person name="Smith H.O."/>
            <person name="Venter J.C."/>
            <person name="Dougherty B.A."/>
            <person name="Morrison D.A."/>
            <person name="Hollingshead S.K."/>
            <person name="Fraser C.M."/>
        </authorList>
    </citation>
    <scope>NUCLEOTIDE SEQUENCE [LARGE SCALE GENOMIC DNA]</scope>
    <source>
        <strain>ATCC BAA-334 / TIGR4</strain>
    </source>
</reference>
<name>RF2_STRPN</name>
<evidence type="ECO:0000255" key="1">
    <source>
        <dbReference type="HAMAP-Rule" id="MF_00094"/>
    </source>
</evidence>
<dbReference type="EMBL" id="AE005672">
    <property type="protein sequence ID" value="ABC75805.1"/>
    <property type="molecule type" value="Genomic_DNA"/>
</dbReference>
<dbReference type="SMR" id="Q2MGI2"/>
<dbReference type="PaxDb" id="170187-SP_0755"/>
<dbReference type="EnsemblBacteria" id="ABC75805">
    <property type="protein sequence ID" value="ABC75805"/>
    <property type="gene ID" value="SP_0755"/>
</dbReference>
<dbReference type="KEGG" id="spn:SP_0755"/>
<dbReference type="eggNOG" id="COG1186">
    <property type="taxonomic scope" value="Bacteria"/>
</dbReference>
<dbReference type="PhylomeDB" id="Q2MGI2"/>
<dbReference type="Proteomes" id="UP000000585">
    <property type="component" value="Chromosome"/>
</dbReference>
<dbReference type="GO" id="GO:0005737">
    <property type="term" value="C:cytoplasm"/>
    <property type="evidence" value="ECO:0007669"/>
    <property type="project" value="UniProtKB-SubCell"/>
</dbReference>
<dbReference type="GO" id="GO:0016149">
    <property type="term" value="F:translation release factor activity, codon specific"/>
    <property type="evidence" value="ECO:0007669"/>
    <property type="project" value="UniProtKB-UniRule"/>
</dbReference>
<dbReference type="Gene3D" id="3.30.160.20">
    <property type="match status" value="1"/>
</dbReference>
<dbReference type="Gene3D" id="3.30.70.1660">
    <property type="match status" value="1"/>
</dbReference>
<dbReference type="Gene3D" id="1.20.58.410">
    <property type="entry name" value="Release factor"/>
    <property type="match status" value="1"/>
</dbReference>
<dbReference type="HAMAP" id="MF_00094">
    <property type="entry name" value="Rel_fac_2"/>
    <property type="match status" value="1"/>
</dbReference>
<dbReference type="InterPro" id="IPR005139">
    <property type="entry name" value="PCRF"/>
</dbReference>
<dbReference type="InterPro" id="IPR000352">
    <property type="entry name" value="Pep_chain_release_fac_I"/>
</dbReference>
<dbReference type="InterPro" id="IPR045853">
    <property type="entry name" value="Pep_chain_release_fac_I_sf"/>
</dbReference>
<dbReference type="InterPro" id="IPR004374">
    <property type="entry name" value="PrfB"/>
</dbReference>
<dbReference type="NCBIfam" id="TIGR00020">
    <property type="entry name" value="prfB"/>
    <property type="match status" value="1"/>
</dbReference>
<dbReference type="PANTHER" id="PTHR43116:SF3">
    <property type="entry name" value="CLASS I PEPTIDE CHAIN RELEASE FACTOR"/>
    <property type="match status" value="1"/>
</dbReference>
<dbReference type="PANTHER" id="PTHR43116">
    <property type="entry name" value="PEPTIDE CHAIN RELEASE FACTOR 2"/>
    <property type="match status" value="1"/>
</dbReference>
<dbReference type="Pfam" id="PF03462">
    <property type="entry name" value="PCRF"/>
    <property type="match status" value="1"/>
</dbReference>
<dbReference type="Pfam" id="PF00472">
    <property type="entry name" value="RF-1"/>
    <property type="match status" value="1"/>
</dbReference>
<dbReference type="SMART" id="SM00937">
    <property type="entry name" value="PCRF"/>
    <property type="match status" value="1"/>
</dbReference>
<dbReference type="SUPFAM" id="SSF75620">
    <property type="entry name" value="Release factor"/>
    <property type="match status" value="1"/>
</dbReference>
<dbReference type="PROSITE" id="PS00745">
    <property type="entry name" value="RF_PROK_I"/>
    <property type="match status" value="1"/>
</dbReference>
<feature type="chain" id="PRO_1000005015" description="Peptide chain release factor 2">
    <location>
        <begin position="1"/>
        <end position="364"/>
    </location>
</feature>
<feature type="modified residue" description="N5-methylglutamine" evidence="1">
    <location>
        <position position="249"/>
    </location>
</feature>